<accession>B1MEG8</accession>
<evidence type="ECO:0000250" key="1"/>
<evidence type="ECO:0000255" key="2">
    <source>
        <dbReference type="PROSITE-ProRule" id="PRU00517"/>
    </source>
</evidence>
<evidence type="ECO:0000255" key="3">
    <source>
        <dbReference type="PROSITE-ProRule" id="PRU01007"/>
    </source>
</evidence>
<keyword id="KW-0028">Amino-acid biosynthesis</keyword>
<keyword id="KW-0057">Aromatic amino acid biosynthesis</keyword>
<keyword id="KW-0456">Lyase</keyword>
<keyword id="KW-0584">Phenylalanine biosynthesis</keyword>
<keyword id="KW-1185">Reference proteome</keyword>
<reference key="1">
    <citation type="journal article" date="2009" name="PLoS ONE">
        <title>Non mycobacterial virulence genes in the genome of the emerging pathogen Mycobacterium abscessus.</title>
        <authorList>
            <person name="Ripoll F."/>
            <person name="Pasek S."/>
            <person name="Schenowitz C."/>
            <person name="Dossat C."/>
            <person name="Barbe V."/>
            <person name="Rottman M."/>
            <person name="Macheras E."/>
            <person name="Heym B."/>
            <person name="Herrmann J.L."/>
            <person name="Daffe M."/>
            <person name="Brosch R."/>
            <person name="Risler J.L."/>
            <person name="Gaillard J.L."/>
        </authorList>
    </citation>
    <scope>NUCLEOTIDE SEQUENCE [LARGE SCALE GENOMIC DNA]</scope>
    <source>
        <strain>ATCC 19977 / DSM 44196 / CCUG 20993 / CIP 104536 / JCM 13569 / NCTC 13031 / TMC 1543 / L948</strain>
    </source>
</reference>
<dbReference type="EC" id="4.2.1.51"/>
<dbReference type="EMBL" id="CU458896">
    <property type="protein sequence ID" value="CAM60232.1"/>
    <property type="molecule type" value="Genomic_DNA"/>
</dbReference>
<dbReference type="RefSeq" id="WP_005062863.1">
    <property type="nucleotide sequence ID" value="NZ_MLCG01000005.1"/>
</dbReference>
<dbReference type="SMR" id="B1MEG8"/>
<dbReference type="GeneID" id="93377075"/>
<dbReference type="KEGG" id="mab:MAB_0132"/>
<dbReference type="UniPathway" id="UPA00121">
    <property type="reaction ID" value="UER00345"/>
</dbReference>
<dbReference type="Proteomes" id="UP000007137">
    <property type="component" value="Chromosome"/>
</dbReference>
<dbReference type="GO" id="GO:0005737">
    <property type="term" value="C:cytoplasm"/>
    <property type="evidence" value="ECO:0007669"/>
    <property type="project" value="TreeGrafter"/>
</dbReference>
<dbReference type="GO" id="GO:0004664">
    <property type="term" value="F:prephenate dehydratase activity"/>
    <property type="evidence" value="ECO:0007669"/>
    <property type="project" value="UniProtKB-EC"/>
</dbReference>
<dbReference type="GO" id="GO:0042803">
    <property type="term" value="F:protein homodimerization activity"/>
    <property type="evidence" value="ECO:0000250"/>
    <property type="project" value="UniProtKB"/>
</dbReference>
<dbReference type="GO" id="GO:0009094">
    <property type="term" value="P:L-phenylalanine biosynthetic process"/>
    <property type="evidence" value="ECO:0007669"/>
    <property type="project" value="UniProtKB-UniPathway"/>
</dbReference>
<dbReference type="CDD" id="cd04905">
    <property type="entry name" value="ACT_CM-PDT"/>
    <property type="match status" value="1"/>
</dbReference>
<dbReference type="CDD" id="cd13632">
    <property type="entry name" value="PBP2_Aa-PDT_like"/>
    <property type="match status" value="1"/>
</dbReference>
<dbReference type="FunFam" id="3.30.70.260:FF:000012">
    <property type="entry name" value="Prephenate dehydratase"/>
    <property type="match status" value="1"/>
</dbReference>
<dbReference type="FunFam" id="3.40.190.10:FF:000064">
    <property type="entry name" value="Prephenate dehydratase"/>
    <property type="match status" value="1"/>
</dbReference>
<dbReference type="FunFam" id="3.40.190.10:FF:000146">
    <property type="entry name" value="Prephenate dehydratase"/>
    <property type="match status" value="1"/>
</dbReference>
<dbReference type="Gene3D" id="3.30.70.260">
    <property type="match status" value="1"/>
</dbReference>
<dbReference type="Gene3D" id="3.40.190.10">
    <property type="entry name" value="Periplasmic binding protein-like II"/>
    <property type="match status" value="2"/>
</dbReference>
<dbReference type="InterPro" id="IPR045865">
    <property type="entry name" value="ACT-like_dom_sf"/>
</dbReference>
<dbReference type="InterPro" id="IPR002912">
    <property type="entry name" value="ACT_dom"/>
</dbReference>
<dbReference type="InterPro" id="IPR008242">
    <property type="entry name" value="Chor_mutase/pphenate_deHydtase"/>
</dbReference>
<dbReference type="InterPro" id="IPR001086">
    <property type="entry name" value="Preph_deHydtase"/>
</dbReference>
<dbReference type="InterPro" id="IPR018528">
    <property type="entry name" value="Preph_deHydtase_CS"/>
</dbReference>
<dbReference type="NCBIfam" id="NF008865">
    <property type="entry name" value="PRK11898.1"/>
    <property type="match status" value="1"/>
</dbReference>
<dbReference type="PANTHER" id="PTHR21022">
    <property type="entry name" value="PREPHENATE DEHYDRATASE P PROTEIN"/>
    <property type="match status" value="1"/>
</dbReference>
<dbReference type="PANTHER" id="PTHR21022:SF19">
    <property type="entry name" value="PREPHENATE DEHYDRATASE-RELATED"/>
    <property type="match status" value="1"/>
</dbReference>
<dbReference type="Pfam" id="PF01842">
    <property type="entry name" value="ACT"/>
    <property type="match status" value="1"/>
</dbReference>
<dbReference type="Pfam" id="PF00800">
    <property type="entry name" value="PDT"/>
    <property type="match status" value="1"/>
</dbReference>
<dbReference type="PIRSF" id="PIRSF001500">
    <property type="entry name" value="Chor_mut_pdt_Ppr"/>
    <property type="match status" value="1"/>
</dbReference>
<dbReference type="SUPFAM" id="SSF55021">
    <property type="entry name" value="ACT-like"/>
    <property type="match status" value="1"/>
</dbReference>
<dbReference type="SUPFAM" id="SSF53850">
    <property type="entry name" value="Periplasmic binding protein-like II"/>
    <property type="match status" value="1"/>
</dbReference>
<dbReference type="PROSITE" id="PS51671">
    <property type="entry name" value="ACT"/>
    <property type="match status" value="1"/>
</dbReference>
<dbReference type="PROSITE" id="PS00858">
    <property type="entry name" value="PREPHENATE_DEHYDR_2"/>
    <property type="match status" value="1"/>
</dbReference>
<dbReference type="PROSITE" id="PS51171">
    <property type="entry name" value="PREPHENATE_DEHYDR_3"/>
    <property type="match status" value="1"/>
</dbReference>
<sequence>MQRITYLGPEGTFSEAAMITLRTTGRIPGSSEVEPVSVASAREALVQVQAGDADYACVPIESSLEGPVVPTLDTLAVGAPLQIFAETVLPVSFTIAVRPGTAAGDVKTVAGFPIAAAQVREWLATNLPDAELVAANSNAAAAEDVKAERADAGVCTEWAAQRLGLHALASGVVDEAHAHTRFVLVGRPGPPPAATGADRTSVVLGLGNVPGALAAAMNEFAIRDIDLTRIESRPTRTGLGTYRFFLDCVGHIDDIAVGEALKGLHRRCEDVRYLGSWPRGTTAPTGANPPVLDEASGWLAETREGRLR</sequence>
<organism>
    <name type="scientific">Mycobacteroides abscessus (strain ATCC 19977 / DSM 44196 / CCUG 20993 / CIP 104536 / JCM 13569 / NCTC 13031 / TMC 1543 / L948)</name>
    <name type="common">Mycobacterium abscessus</name>
    <dbReference type="NCBI Taxonomy" id="561007"/>
    <lineage>
        <taxon>Bacteria</taxon>
        <taxon>Bacillati</taxon>
        <taxon>Actinomycetota</taxon>
        <taxon>Actinomycetes</taxon>
        <taxon>Mycobacteriales</taxon>
        <taxon>Mycobacteriaceae</taxon>
        <taxon>Mycobacteroides</taxon>
        <taxon>Mycobacteroides abscessus</taxon>
    </lineage>
</organism>
<name>PHEA_MYCA9</name>
<protein>
    <recommendedName>
        <fullName>Prephenate dehydratase</fullName>
        <shortName>PDT</shortName>
        <ecNumber>4.2.1.51</ecNumber>
    </recommendedName>
</protein>
<feature type="chain" id="PRO_0000382030" description="Prephenate dehydratase">
    <location>
        <begin position="1"/>
        <end position="308"/>
    </location>
</feature>
<feature type="domain" description="Prephenate dehydratase" evidence="2">
    <location>
        <begin position="3"/>
        <end position="187"/>
    </location>
</feature>
<feature type="domain" description="ACT" evidence="3">
    <location>
        <begin position="201"/>
        <end position="278"/>
    </location>
</feature>
<feature type="site" description="Essential for activity" evidence="1">
    <location>
        <position position="180"/>
    </location>
</feature>
<comment type="catalytic activity">
    <reaction>
        <text>prephenate + H(+) = 3-phenylpyruvate + CO2 + H2O</text>
        <dbReference type="Rhea" id="RHEA:21648"/>
        <dbReference type="ChEBI" id="CHEBI:15377"/>
        <dbReference type="ChEBI" id="CHEBI:15378"/>
        <dbReference type="ChEBI" id="CHEBI:16526"/>
        <dbReference type="ChEBI" id="CHEBI:18005"/>
        <dbReference type="ChEBI" id="CHEBI:29934"/>
        <dbReference type="EC" id="4.2.1.51"/>
    </reaction>
</comment>
<comment type="pathway">
    <text>Amino-acid biosynthesis; L-phenylalanine biosynthesis; phenylpyruvate from prephenate: step 1/1.</text>
</comment>
<comment type="subunit">
    <text evidence="1">Homodimer.</text>
</comment>
<proteinExistence type="inferred from homology"/>
<gene>
    <name type="primary">pheA</name>
    <name type="ordered locus">MAB_0132</name>
</gene>